<sequence length="276" mass="30861">MAAAKRRVRDAEADLNLPPGFRFHPTDEELVAHYLCPRAAGRAAPVPIIAELDLYRHDPWDLPHRALFGRREWYFFTPRDRKYPNGSRPNRAAASGYWKATGADKPVLHNGRTAGIKKALVFYHGKPPRGVKTEWIMHEYRLAKKGGAAAAAGAGALRLDDWVLCRLYNKKNEWEKMQSRKEEEEAMAAAQSWGETRTPESEVVDSDAFPEMDYSLPAASFDDALLPKEEARDDDWLMGMSLDDLQGLGSLLQADDLSMLAPPPAAKTEPLGAPFF</sequence>
<comment type="function">
    <text evidence="1">Probable transcription factor involved in stress response.</text>
</comment>
<comment type="subcellular location">
    <subcellularLocation>
        <location evidence="2">Nucleus</location>
    </subcellularLocation>
</comment>
<comment type="tissue specificity">
    <text evidence="3">Expressed in leaf blades.</text>
</comment>
<comment type="induction">
    <text evidence="4 5">Induced by salt and cold stresses (PubMed:18813954, PubMed:20632034). Induced by dehydration and methyl jasmonate (PubMed:20632034).</text>
</comment>
<comment type="domain">
    <text evidence="2">The NAC domain includes a DNA binding domain and a dimerization domain.</text>
</comment>
<proteinExistence type="evidence at transcript level"/>
<evidence type="ECO:0000250" key="1">
    <source>
        <dbReference type="UniProtKB" id="Q7F2L3"/>
    </source>
</evidence>
<evidence type="ECO:0000255" key="2">
    <source>
        <dbReference type="PROSITE-ProRule" id="PRU00353"/>
    </source>
</evidence>
<evidence type="ECO:0000269" key="3">
    <source>
    </source>
</evidence>
<evidence type="ECO:0000269" key="4">
    <source>
    </source>
</evidence>
<evidence type="ECO:0000269" key="5">
    <source>
    </source>
</evidence>
<evidence type="ECO:0000303" key="6">
    <source>
    </source>
</evidence>
<evidence type="ECO:0000303" key="7">
    <source>
    </source>
</evidence>
<evidence type="ECO:0000305" key="8"/>
<evidence type="ECO:0000312" key="9">
    <source>
        <dbReference type="EMBL" id="BAC10231.1"/>
    </source>
</evidence>
<evidence type="ECO:0000312" key="10">
    <source>
        <dbReference type="EMBL" id="BAD31538.1"/>
    </source>
</evidence>
<evidence type="ECO:0000312" key="11">
    <source>
        <dbReference type="EMBL" id="BAT00678.1"/>
    </source>
</evidence>
<gene>
    <name evidence="7" type="primary">NAC067</name>
    <name evidence="6" type="synonym">NAC3</name>
    <name evidence="11" type="ordered locus">Os07g0225300</name>
    <name evidence="8" type="ordered locus">LOC_Os07g12340</name>
    <name evidence="10" type="ORF">OSJNBa0066H10.107</name>
    <name evidence="9" type="ORF">P0668C05.126</name>
</gene>
<organism>
    <name type="scientific">Oryza sativa subsp. japonica</name>
    <name type="common">Rice</name>
    <dbReference type="NCBI Taxonomy" id="39947"/>
    <lineage>
        <taxon>Eukaryota</taxon>
        <taxon>Viridiplantae</taxon>
        <taxon>Streptophyta</taxon>
        <taxon>Embryophyta</taxon>
        <taxon>Tracheophyta</taxon>
        <taxon>Spermatophyta</taxon>
        <taxon>Magnoliopsida</taxon>
        <taxon>Liliopsida</taxon>
        <taxon>Poales</taxon>
        <taxon>Poaceae</taxon>
        <taxon>BOP clade</taxon>
        <taxon>Oryzoideae</taxon>
        <taxon>Oryzeae</taxon>
        <taxon>Oryzinae</taxon>
        <taxon>Oryza</taxon>
        <taxon>Oryza sativa</taxon>
    </lineage>
</organism>
<name>NAC67_ORYSJ</name>
<dbReference type="EMBL" id="AB028182">
    <property type="protein sequence ID" value="BAA89797.1"/>
    <property type="molecule type" value="mRNA"/>
</dbReference>
<dbReference type="EMBL" id="AP004572">
    <property type="protein sequence ID" value="BAC10231.1"/>
    <property type="molecule type" value="Genomic_DNA"/>
</dbReference>
<dbReference type="EMBL" id="AP005516">
    <property type="protein sequence ID" value="BAD31538.1"/>
    <property type="molecule type" value="Genomic_DNA"/>
</dbReference>
<dbReference type="EMBL" id="AP008213">
    <property type="protein sequence ID" value="BAF21127.1"/>
    <property type="molecule type" value="Genomic_DNA"/>
</dbReference>
<dbReference type="EMBL" id="AP014963">
    <property type="protein sequence ID" value="BAT00678.1"/>
    <property type="molecule type" value="Genomic_DNA"/>
</dbReference>
<dbReference type="EMBL" id="AK073667">
    <property type="protein sequence ID" value="BAG93582.1"/>
    <property type="molecule type" value="mRNA"/>
</dbReference>
<dbReference type="RefSeq" id="XP_015645028.1">
    <property type="nucleotide sequence ID" value="XM_015789542.1"/>
</dbReference>
<dbReference type="SMR" id="Q7EZT1"/>
<dbReference type="FunCoup" id="Q7EZT1">
    <property type="interactions" value="3"/>
</dbReference>
<dbReference type="PaxDb" id="39947-Q7EZT1"/>
<dbReference type="EnsemblPlants" id="Os07t0225300-01">
    <property type="protein sequence ID" value="Os07t0225300-01"/>
    <property type="gene ID" value="Os07g0225300"/>
</dbReference>
<dbReference type="Gramene" id="Os07t0225300-01">
    <property type="protein sequence ID" value="Os07t0225300-01"/>
    <property type="gene ID" value="Os07g0225300"/>
</dbReference>
<dbReference type="KEGG" id="dosa:Os07g0225300"/>
<dbReference type="eggNOG" id="ENOG502QRBC">
    <property type="taxonomic scope" value="Eukaryota"/>
</dbReference>
<dbReference type="HOGENOM" id="CLU_035664_5_2_1"/>
<dbReference type="InParanoid" id="Q7EZT1"/>
<dbReference type="OMA" id="HSPPRTC"/>
<dbReference type="OrthoDB" id="1921961at2759"/>
<dbReference type="Proteomes" id="UP000000763">
    <property type="component" value="Chromosome 7"/>
</dbReference>
<dbReference type="Proteomes" id="UP000059680">
    <property type="component" value="Chromosome 7"/>
</dbReference>
<dbReference type="GO" id="GO:0005634">
    <property type="term" value="C:nucleus"/>
    <property type="evidence" value="ECO:0007669"/>
    <property type="project" value="UniProtKB-SubCell"/>
</dbReference>
<dbReference type="GO" id="GO:0003677">
    <property type="term" value="F:DNA binding"/>
    <property type="evidence" value="ECO:0007669"/>
    <property type="project" value="UniProtKB-KW"/>
</dbReference>
<dbReference type="GO" id="GO:0006355">
    <property type="term" value="P:regulation of DNA-templated transcription"/>
    <property type="evidence" value="ECO:0007669"/>
    <property type="project" value="InterPro"/>
</dbReference>
<dbReference type="FunFam" id="2.170.150.80:FF:000004">
    <property type="entry name" value="NAC transcription factor"/>
    <property type="match status" value="1"/>
</dbReference>
<dbReference type="Gene3D" id="2.170.150.80">
    <property type="entry name" value="NAC domain"/>
    <property type="match status" value="1"/>
</dbReference>
<dbReference type="InterPro" id="IPR003441">
    <property type="entry name" value="NAC-dom"/>
</dbReference>
<dbReference type="InterPro" id="IPR036093">
    <property type="entry name" value="NAC_dom_sf"/>
</dbReference>
<dbReference type="PANTHER" id="PTHR31719:SF80">
    <property type="entry name" value="NAC DOMAIN-CONTAINING PROTEIN 67"/>
    <property type="match status" value="1"/>
</dbReference>
<dbReference type="PANTHER" id="PTHR31719">
    <property type="entry name" value="NAC TRANSCRIPTION FACTOR 56"/>
    <property type="match status" value="1"/>
</dbReference>
<dbReference type="Pfam" id="PF02365">
    <property type="entry name" value="NAM"/>
    <property type="match status" value="1"/>
</dbReference>
<dbReference type="SUPFAM" id="SSF101941">
    <property type="entry name" value="NAC domain"/>
    <property type="match status" value="1"/>
</dbReference>
<dbReference type="PROSITE" id="PS51005">
    <property type="entry name" value="NAC"/>
    <property type="match status" value="1"/>
</dbReference>
<feature type="chain" id="PRO_0000132318" description="NAC domain-containing protein 67">
    <location>
        <begin position="1"/>
        <end position="276"/>
    </location>
</feature>
<feature type="domain" description="NAC" evidence="2">
    <location>
        <begin position="17"/>
        <end position="170"/>
    </location>
</feature>
<protein>
    <recommendedName>
        <fullName evidence="7">NAC domain-containing protein 67</fullName>
        <shortName evidence="7">ONAC067</shortName>
    </recommendedName>
    <alternativeName>
        <fullName evidence="6">OsNAC3</fullName>
    </alternativeName>
</protein>
<reference key="1">
    <citation type="journal article" date="2000" name="Mol. Gen. Genet.">
        <title>Molecular analysis of the NAC gene family in rice.</title>
        <authorList>
            <person name="Kikuchi K."/>
            <person name="Ueguchi-Tanaka M."/>
            <person name="Yoshida K.T."/>
            <person name="Nagato Y."/>
            <person name="Matsusoka M."/>
            <person name="Hirano H.-Y."/>
        </authorList>
    </citation>
    <scope>NUCLEOTIDE SEQUENCE [MRNA]</scope>
    <scope>TISSUE SPECIFICITY</scope>
</reference>
<reference key="2">
    <citation type="journal article" date="2005" name="Nature">
        <title>The map-based sequence of the rice genome.</title>
        <authorList>
            <consortium name="International rice genome sequencing project (IRGSP)"/>
        </authorList>
    </citation>
    <scope>NUCLEOTIDE SEQUENCE [LARGE SCALE GENOMIC DNA]</scope>
    <source>
        <strain>cv. Nipponbare</strain>
    </source>
</reference>
<reference key="3">
    <citation type="journal article" date="2008" name="Nucleic Acids Res.">
        <title>The rice annotation project database (RAP-DB): 2008 update.</title>
        <authorList>
            <consortium name="The rice annotation project (RAP)"/>
        </authorList>
    </citation>
    <scope>GENOME REANNOTATION</scope>
    <source>
        <strain>cv. Nipponbare</strain>
    </source>
</reference>
<reference key="4">
    <citation type="journal article" date="2013" name="Rice">
        <title>Improvement of the Oryza sativa Nipponbare reference genome using next generation sequence and optical map data.</title>
        <authorList>
            <person name="Kawahara Y."/>
            <person name="de la Bastide M."/>
            <person name="Hamilton J.P."/>
            <person name="Kanamori H."/>
            <person name="McCombie W.R."/>
            <person name="Ouyang S."/>
            <person name="Schwartz D.C."/>
            <person name="Tanaka T."/>
            <person name="Wu J."/>
            <person name="Zhou S."/>
            <person name="Childs K.L."/>
            <person name="Davidson R.M."/>
            <person name="Lin H."/>
            <person name="Quesada-Ocampo L."/>
            <person name="Vaillancourt B."/>
            <person name="Sakai H."/>
            <person name="Lee S.S."/>
            <person name="Kim J."/>
            <person name="Numa H."/>
            <person name="Itoh T."/>
            <person name="Buell C.R."/>
            <person name="Matsumoto T."/>
        </authorList>
    </citation>
    <scope>GENOME REANNOTATION</scope>
    <source>
        <strain>cv. Nipponbare</strain>
    </source>
</reference>
<reference key="5">
    <citation type="journal article" date="2003" name="Science">
        <title>Collection, mapping, and annotation of over 28,000 cDNA clones from japonica rice.</title>
        <authorList>
            <consortium name="The rice full-length cDNA consortium"/>
        </authorList>
    </citation>
    <scope>NUCLEOTIDE SEQUENCE [LARGE SCALE MRNA]</scope>
    <source>
        <strain>cv. Nipponbare</strain>
    </source>
</reference>
<reference key="6">
    <citation type="journal article" date="2003" name="DNA Res.">
        <title>Comprehensive analysis of NAC family genes in Oryza sativa and Arabidopsis thaliana.</title>
        <authorList>
            <person name="Ooka H."/>
            <person name="Satoh K."/>
            <person name="Doi K."/>
            <person name="Nagata T."/>
            <person name="Otomo Y."/>
            <person name="Murakami K."/>
            <person name="Matsubara K."/>
            <person name="Osato N."/>
            <person name="Kawai J."/>
            <person name="Carninci P."/>
            <person name="Hayashizaki Y."/>
            <person name="Suzuki K."/>
            <person name="Kojima K."/>
            <person name="Takahara Y."/>
            <person name="Yamamoto K."/>
            <person name="Kikuchi S."/>
        </authorList>
    </citation>
    <scope>GENE FAMILY</scope>
    <scope>NOMENCLATURE</scope>
</reference>
<reference key="7">
    <citation type="journal article" date="2008" name="Mol. Genet. Genomics">
        <title>Systematic sequence analysis and identification of tissue-specific or stress-responsive genes of NAC transcription factor family in rice.</title>
        <authorList>
            <person name="Fang Y."/>
            <person name="You J."/>
            <person name="Xie K."/>
            <person name="Xie W."/>
            <person name="Xiong L."/>
        </authorList>
    </citation>
    <scope>INDUCTION</scope>
</reference>
<reference key="8">
    <citation type="journal article" date="2010" name="Mol. Genet. Genomics">
        <title>The abiotic stress-responsive NAC-type transcription factor OsNAC5 regulates stress-inducible genes and stress tolerance in rice.</title>
        <authorList>
            <person name="Takasaki H."/>
            <person name="Maruyama K."/>
            <person name="Kidokoro S."/>
            <person name="Ito Y."/>
            <person name="Fujita Y."/>
            <person name="Shinozaki K."/>
            <person name="Yamaguchi-Shinozaki K."/>
            <person name="Nakashima K."/>
        </authorList>
    </citation>
    <scope>INDUCTION</scope>
</reference>
<accession>Q7EZT1</accession>
<accession>Q0D7P6</accession>
<accession>Q9MBC7</accession>
<keyword id="KW-0238">DNA-binding</keyword>
<keyword id="KW-0539">Nucleus</keyword>
<keyword id="KW-1185">Reference proteome</keyword>
<keyword id="KW-0804">Transcription</keyword>
<keyword id="KW-0805">Transcription regulation</keyword>